<gene>
    <name evidence="5" type="primary">fscJ</name>
</gene>
<feature type="signal peptide" evidence="3">
    <location>
        <begin position="1"/>
        <end position="19"/>
    </location>
</feature>
<feature type="chain" id="PRO_5033060270" description="Aromatic peroxidase fscJ" evidence="3">
    <location>
        <begin position="20"/>
        <end position="437"/>
    </location>
</feature>
<feature type="binding site" description="axial binding residue" evidence="2">
    <location>
        <position position="83"/>
    </location>
    <ligand>
        <name>heme</name>
        <dbReference type="ChEBI" id="CHEBI:30413"/>
    </ligand>
    <ligandPart>
        <name>Fe</name>
        <dbReference type="ChEBI" id="CHEBI:18248"/>
    </ligandPart>
</feature>
<proteinExistence type="inferred from homology"/>
<accession>A0A823A0V1</accession>
<comment type="function">
    <text evidence="4 7">Aromatic peroxidase; part of the fragmented gene cluster that mediates the biosynthesis of fusarochromene, a tryptophan-derived metabolite closely related to a group of mycotoxins including fusarochromanone (PubMed:33107888). The role of fscJ within the pathway has not been identified yet (Probable). The first step of the pathway is the epimerization of L-tryptophan to D-tryptophan in the presence of the NRPS-like tryptophan epimerase fscC. D-tryptophan is subsequently hydroxylated by the tryptophan 6-hydroxylase fscE to yield 6-hydroxytryptophan. The pyrrole ring undergoes cleavaged by the tryptophan 2,3-dioxygenase fscD and is finally converted to 4-hydroxykyrunenine by the hydrolase fscH. The NRPS-like oxidoreductase fscA reduces the carboxyl group to primary alcohol and the DMATS-type prenyltransferase fscG performs prenylation, followed by the formation of a chromene ring catalyzed by the oxidoreductase fscI, which leads to desacetylfusarochromene. Epoxidation by fscF and rearrangement reactions of chromene double bonds convert compound desacetylfusarochromene to fusarochromanones. Although specific acetyltransferases were not found near the fsc gene cluster, several predicted enzymes containing the N-acetyltransferase superfamily domain are present in the genome of F.equiseti. These predicted enzymes may have the potential to convert desacetylfusarochromene to fusarochromene (Probable).</text>
</comment>
<comment type="cofactor">
    <cofactor evidence="1">
        <name>heme b</name>
        <dbReference type="ChEBI" id="CHEBI:60344"/>
    </cofactor>
    <text evidence="1">Binds 1 heme b (iron(II)-protoporphyrin IX) group.</text>
</comment>
<comment type="pathway">
    <text evidence="7">Secondary metabolite biosynthesis.</text>
</comment>
<comment type="similarity">
    <text evidence="6">Belongs to the chloroperoxidase family.</text>
</comment>
<dbReference type="EC" id="1.11.-.-" evidence="7"/>
<dbReference type="EMBL" id="BK013344">
    <property type="protein sequence ID" value="DAD54583.1"/>
    <property type="molecule type" value="Genomic_DNA"/>
</dbReference>
<dbReference type="SMR" id="A0A823A0V1"/>
<dbReference type="GO" id="GO:0046872">
    <property type="term" value="F:metal ion binding"/>
    <property type="evidence" value="ECO:0007669"/>
    <property type="project" value="UniProtKB-KW"/>
</dbReference>
<dbReference type="GO" id="GO:0004601">
    <property type="term" value="F:peroxidase activity"/>
    <property type="evidence" value="ECO:0007669"/>
    <property type="project" value="UniProtKB-KW"/>
</dbReference>
<dbReference type="Gene3D" id="1.10.489.10">
    <property type="entry name" value="Chloroperoxidase-like"/>
    <property type="match status" value="1"/>
</dbReference>
<dbReference type="InterPro" id="IPR000028">
    <property type="entry name" value="Chloroperoxidase"/>
</dbReference>
<dbReference type="InterPro" id="IPR036851">
    <property type="entry name" value="Chloroperoxidase-like_sf"/>
</dbReference>
<dbReference type="PANTHER" id="PTHR33577:SF16">
    <property type="entry name" value="HEME HALOPEROXIDASE FAMILY PROFILE DOMAIN-CONTAINING PROTEIN"/>
    <property type="match status" value="1"/>
</dbReference>
<dbReference type="PANTHER" id="PTHR33577">
    <property type="entry name" value="STERIGMATOCYSTIN BIOSYNTHESIS PEROXIDASE STCC-RELATED"/>
    <property type="match status" value="1"/>
</dbReference>
<dbReference type="Pfam" id="PF01328">
    <property type="entry name" value="Peroxidase_2"/>
    <property type="match status" value="1"/>
</dbReference>
<dbReference type="SUPFAM" id="SSF47571">
    <property type="entry name" value="Cloroperoxidase"/>
    <property type="match status" value="1"/>
</dbReference>
<dbReference type="PROSITE" id="PS51405">
    <property type="entry name" value="HEME_HALOPEROXIDASE"/>
    <property type="match status" value="1"/>
</dbReference>
<organism>
    <name type="scientific">Fusarium equiseti</name>
    <name type="common">Fusarium scirpi</name>
    <dbReference type="NCBI Taxonomy" id="61235"/>
    <lineage>
        <taxon>Eukaryota</taxon>
        <taxon>Fungi</taxon>
        <taxon>Dikarya</taxon>
        <taxon>Ascomycota</taxon>
        <taxon>Pezizomycotina</taxon>
        <taxon>Sordariomycetes</taxon>
        <taxon>Hypocreomycetidae</taxon>
        <taxon>Hypocreales</taxon>
        <taxon>Nectriaceae</taxon>
        <taxon>Fusarium</taxon>
        <taxon>Fusarium incarnatum-equiseti species complex</taxon>
    </lineage>
</organism>
<keyword id="KW-0349">Heme</keyword>
<keyword id="KW-0408">Iron</keyword>
<keyword id="KW-0479">Metal-binding</keyword>
<keyword id="KW-0560">Oxidoreductase</keyword>
<keyword id="KW-0575">Peroxidase</keyword>
<keyword id="KW-0732">Signal</keyword>
<name>FSCJ_FUSEQ</name>
<evidence type="ECO:0000250" key="1">
    <source>
        <dbReference type="UniProtKB" id="B9W4V6"/>
    </source>
</evidence>
<evidence type="ECO:0000250" key="2">
    <source>
        <dbReference type="UniProtKB" id="P04963"/>
    </source>
</evidence>
<evidence type="ECO:0000255" key="3"/>
<evidence type="ECO:0000269" key="4">
    <source>
    </source>
</evidence>
<evidence type="ECO:0000303" key="5">
    <source>
    </source>
</evidence>
<evidence type="ECO:0000305" key="6"/>
<evidence type="ECO:0000305" key="7">
    <source>
    </source>
</evidence>
<sequence length="437" mass="47402">MKWLHLLSVVACVADEVYAFPSHLHGAVGHLTASRLSSVVDEAVRSAHEKRLLFDAGNEPIDVTGKHEFIPPNFEKGDQRGPCPGLNALANHGYIKRNGVTNLVETIGAINKVYGMGIDLATILTTMGVVFVGNPLSLNPGFSIGSTPKGNDNILGNLVGLLGKPRGLVGSHNIIEGDSSNTRADLYVTGDASTMAMDQFESFYDMASDEGTYDFDTFAERAKIRFHETIETNPDFYYGPFTGMIVRNAGYFFACRMLSNHTKGSHEDIMDQATLRSFFAVQKEGDKLTYKRGWERIPTNWYRRSVDYGLIDVNLDVISLITKYPELGSIGGNMGEVNSYAGVDISDITGGVLNLTKLLEGNNLLCFVFEVVKTVSPNSLSGLFSIVVPPLKLITDALGTALLDLSCPALKDLQVGGESFSKGIQKKFPGAKINASL</sequence>
<protein>
    <recommendedName>
        <fullName evidence="5">Aromatic peroxidase fscJ</fullName>
        <ecNumber evidence="7">1.11.-.-</ecNumber>
    </recommendedName>
    <alternativeName>
        <fullName evidence="5">Fusarochromene biosynthesis cluster protein J</fullName>
    </alternativeName>
</protein>
<reference key="1">
    <citation type="journal article" date="2021" name="Org. Biomol. Chem.">
        <title>Fusarochromene, a novel tryptophan-derived metabolite from Fusarium sacchari.</title>
        <authorList>
            <person name="Marshall J.W."/>
            <person name="de Mattos-Shipley K.M.J."/>
            <person name="Ghannam I.A.Y."/>
            <person name="Munawar A."/>
            <person name="Killen J.C."/>
            <person name="Lazarus C.M."/>
            <person name="Cox R.J."/>
            <person name="Willis C.L."/>
            <person name="Simpson T.J."/>
        </authorList>
    </citation>
    <scope>NUCLEOTIDE SEQUENCE [GENOMIC DNA]</scope>
    <scope>FUNCTION</scope>
    <scope>PATHWAY</scope>
</reference>